<comment type="function">
    <text evidence="1">Catalyzes the pyruvoyl-dependent decarboxylation of aspartate to produce beta-alanine.</text>
</comment>
<comment type="catalytic activity">
    <reaction evidence="1">
        <text>L-aspartate + H(+) = beta-alanine + CO2</text>
        <dbReference type="Rhea" id="RHEA:19497"/>
        <dbReference type="ChEBI" id="CHEBI:15378"/>
        <dbReference type="ChEBI" id="CHEBI:16526"/>
        <dbReference type="ChEBI" id="CHEBI:29991"/>
        <dbReference type="ChEBI" id="CHEBI:57966"/>
        <dbReference type="EC" id="4.1.1.11"/>
    </reaction>
</comment>
<comment type="cofactor">
    <cofactor evidence="1">
        <name>pyruvate</name>
        <dbReference type="ChEBI" id="CHEBI:15361"/>
    </cofactor>
    <text evidence="1">Binds 1 pyruvoyl group covalently per subunit.</text>
</comment>
<comment type="pathway">
    <text evidence="1">Cofactor biosynthesis; (R)-pantothenate biosynthesis; beta-alanine from L-aspartate: step 1/1.</text>
</comment>
<comment type="subunit">
    <text evidence="1">Heterooctamer of four alpha and four beta subunits.</text>
</comment>
<comment type="subcellular location">
    <subcellularLocation>
        <location evidence="1">Cytoplasm</location>
    </subcellularLocation>
</comment>
<comment type="PTM">
    <text evidence="1">Is synthesized initially as an inactive proenzyme, which is activated by self-cleavage at a specific serine bond to produce a beta-subunit with a hydroxyl group at its C-terminus and an alpha-subunit with a pyruvoyl group at its N-terminus.</text>
</comment>
<comment type="similarity">
    <text evidence="1">Belongs to the PanD family.</text>
</comment>
<accession>Q5F8Y9</accession>
<name>PAND_NEIG1</name>
<sequence>MFRTILGGKIHRATVTEADLNYVGSITVDQDLLDAAGICPNEKVAIVNNNNGERFETYTIAGKRGSGVICLNGAAARLVQKGDIVIIMSYIQLSEPEIAAHEPKVVLVDGNNKIRDIISYEPPHTVL</sequence>
<proteinExistence type="inferred from homology"/>
<dbReference type="EC" id="4.1.1.11" evidence="1"/>
<dbReference type="EMBL" id="AE004969">
    <property type="protein sequence ID" value="AAW89348.1"/>
    <property type="molecule type" value="Genomic_DNA"/>
</dbReference>
<dbReference type="RefSeq" id="WP_003688909.1">
    <property type="nucleotide sequence ID" value="NC_002946.2"/>
</dbReference>
<dbReference type="RefSeq" id="YP_207760.1">
    <property type="nucleotide sequence ID" value="NC_002946.2"/>
</dbReference>
<dbReference type="SMR" id="Q5F8Y9"/>
<dbReference type="STRING" id="242231.NGO_0620"/>
<dbReference type="GeneID" id="66752959"/>
<dbReference type="KEGG" id="ngo:NGO_0620"/>
<dbReference type="PATRIC" id="fig|242231.10.peg.734"/>
<dbReference type="HOGENOM" id="CLU_115305_2_0_4"/>
<dbReference type="BRENDA" id="4.1.1.11">
    <property type="organism ID" value="3590"/>
</dbReference>
<dbReference type="UniPathway" id="UPA00028">
    <property type="reaction ID" value="UER00002"/>
</dbReference>
<dbReference type="Proteomes" id="UP000000535">
    <property type="component" value="Chromosome"/>
</dbReference>
<dbReference type="GO" id="GO:0005829">
    <property type="term" value="C:cytosol"/>
    <property type="evidence" value="ECO:0007669"/>
    <property type="project" value="TreeGrafter"/>
</dbReference>
<dbReference type="GO" id="GO:0004068">
    <property type="term" value="F:aspartate 1-decarboxylase activity"/>
    <property type="evidence" value="ECO:0007669"/>
    <property type="project" value="UniProtKB-UniRule"/>
</dbReference>
<dbReference type="GO" id="GO:0006523">
    <property type="term" value="P:alanine biosynthetic process"/>
    <property type="evidence" value="ECO:0007669"/>
    <property type="project" value="InterPro"/>
</dbReference>
<dbReference type="GO" id="GO:0015940">
    <property type="term" value="P:pantothenate biosynthetic process"/>
    <property type="evidence" value="ECO:0007669"/>
    <property type="project" value="UniProtKB-UniRule"/>
</dbReference>
<dbReference type="CDD" id="cd06919">
    <property type="entry name" value="Asp_decarbox"/>
    <property type="match status" value="1"/>
</dbReference>
<dbReference type="Gene3D" id="2.40.40.20">
    <property type="match status" value="1"/>
</dbReference>
<dbReference type="HAMAP" id="MF_00446">
    <property type="entry name" value="PanD"/>
    <property type="match status" value="1"/>
</dbReference>
<dbReference type="InterPro" id="IPR009010">
    <property type="entry name" value="Asp_de-COase-like_dom_sf"/>
</dbReference>
<dbReference type="InterPro" id="IPR003190">
    <property type="entry name" value="Asp_decarbox"/>
</dbReference>
<dbReference type="NCBIfam" id="TIGR00223">
    <property type="entry name" value="panD"/>
    <property type="match status" value="1"/>
</dbReference>
<dbReference type="PANTHER" id="PTHR21012">
    <property type="entry name" value="ASPARTATE 1-DECARBOXYLASE"/>
    <property type="match status" value="1"/>
</dbReference>
<dbReference type="PANTHER" id="PTHR21012:SF0">
    <property type="entry name" value="ASPARTATE 1-DECARBOXYLASE"/>
    <property type="match status" value="1"/>
</dbReference>
<dbReference type="Pfam" id="PF02261">
    <property type="entry name" value="Asp_decarbox"/>
    <property type="match status" value="1"/>
</dbReference>
<dbReference type="PIRSF" id="PIRSF006246">
    <property type="entry name" value="Asp_decarbox"/>
    <property type="match status" value="1"/>
</dbReference>
<dbReference type="SUPFAM" id="SSF50692">
    <property type="entry name" value="ADC-like"/>
    <property type="match status" value="1"/>
</dbReference>
<protein>
    <recommendedName>
        <fullName evidence="1">Aspartate 1-decarboxylase</fullName>
        <ecNumber evidence="1">4.1.1.11</ecNumber>
    </recommendedName>
    <alternativeName>
        <fullName evidence="1">Aspartate alpha-decarboxylase</fullName>
    </alternativeName>
    <component>
        <recommendedName>
            <fullName evidence="1">Aspartate 1-decarboxylase beta chain</fullName>
        </recommendedName>
    </component>
    <component>
        <recommendedName>
            <fullName evidence="1">Aspartate 1-decarboxylase alpha chain</fullName>
        </recommendedName>
    </component>
</protein>
<reference key="1">
    <citation type="submission" date="2003-03" db="EMBL/GenBank/DDBJ databases">
        <title>The complete genome sequence of Neisseria gonorrhoeae.</title>
        <authorList>
            <person name="Lewis L.A."/>
            <person name="Gillaspy A.F."/>
            <person name="McLaughlin R.E."/>
            <person name="Gipson M."/>
            <person name="Ducey T.F."/>
            <person name="Ownbey T."/>
            <person name="Hartman K."/>
            <person name="Nydick C."/>
            <person name="Carson M.B."/>
            <person name="Vaughn J."/>
            <person name="Thomson C."/>
            <person name="Song L."/>
            <person name="Lin S."/>
            <person name="Yuan X."/>
            <person name="Najar F."/>
            <person name="Zhan M."/>
            <person name="Ren Q."/>
            <person name="Zhu H."/>
            <person name="Qi S."/>
            <person name="Kenton S.M."/>
            <person name="Lai H."/>
            <person name="White J.D."/>
            <person name="Clifton S."/>
            <person name="Roe B.A."/>
            <person name="Dyer D.W."/>
        </authorList>
    </citation>
    <scope>NUCLEOTIDE SEQUENCE [LARGE SCALE GENOMIC DNA]</scope>
    <source>
        <strain>ATCC 700825 / FA 1090</strain>
    </source>
</reference>
<evidence type="ECO:0000255" key="1">
    <source>
        <dbReference type="HAMAP-Rule" id="MF_00446"/>
    </source>
</evidence>
<organism>
    <name type="scientific">Neisseria gonorrhoeae (strain ATCC 700825 / FA 1090)</name>
    <dbReference type="NCBI Taxonomy" id="242231"/>
    <lineage>
        <taxon>Bacteria</taxon>
        <taxon>Pseudomonadati</taxon>
        <taxon>Pseudomonadota</taxon>
        <taxon>Betaproteobacteria</taxon>
        <taxon>Neisseriales</taxon>
        <taxon>Neisseriaceae</taxon>
        <taxon>Neisseria</taxon>
    </lineage>
</organism>
<keyword id="KW-0068">Autocatalytic cleavage</keyword>
<keyword id="KW-0963">Cytoplasm</keyword>
<keyword id="KW-0210">Decarboxylase</keyword>
<keyword id="KW-0456">Lyase</keyword>
<keyword id="KW-0566">Pantothenate biosynthesis</keyword>
<keyword id="KW-0670">Pyruvate</keyword>
<keyword id="KW-1185">Reference proteome</keyword>
<keyword id="KW-0704">Schiff base</keyword>
<keyword id="KW-0865">Zymogen</keyword>
<gene>
    <name evidence="1" type="primary">panD</name>
    <name type="ordered locus">NGO_0620</name>
</gene>
<feature type="chain" id="PRO_0000023123" description="Aspartate 1-decarboxylase beta chain" evidence="1">
    <location>
        <begin position="1"/>
        <end position="24"/>
    </location>
</feature>
<feature type="chain" id="PRO_0000023124" description="Aspartate 1-decarboxylase alpha chain" evidence="1">
    <location>
        <begin position="25"/>
        <end position="127"/>
    </location>
</feature>
<feature type="active site" description="Schiff-base intermediate with substrate; via pyruvic acid" evidence="1">
    <location>
        <position position="25"/>
    </location>
</feature>
<feature type="active site" description="Proton donor" evidence="1">
    <location>
        <position position="58"/>
    </location>
</feature>
<feature type="binding site" evidence="1">
    <location>
        <position position="57"/>
    </location>
    <ligand>
        <name>substrate</name>
    </ligand>
</feature>
<feature type="binding site" evidence="1">
    <location>
        <begin position="73"/>
        <end position="75"/>
    </location>
    <ligand>
        <name>substrate</name>
    </ligand>
</feature>
<feature type="modified residue" description="Pyruvic acid (Ser)" evidence="1">
    <location>
        <position position="25"/>
    </location>
</feature>